<dbReference type="EMBL" id="AL033497">
    <property type="protein sequence ID" value="CAA21965.1"/>
    <property type="molecule type" value="Genomic_DNA"/>
</dbReference>
<dbReference type="PIR" id="T52145">
    <property type="entry name" value="T52145"/>
</dbReference>
<dbReference type="PDB" id="8C3A">
    <property type="method" value="X-ray"/>
    <property type="resolution" value="3.00 A"/>
    <property type="chains" value="DD/S=1-142"/>
</dbReference>
<dbReference type="PDB" id="8CQ7">
    <property type="method" value="X-ray"/>
    <property type="resolution" value="3.20 A"/>
    <property type="chains" value="DD/S=1-142"/>
</dbReference>
<dbReference type="PDB" id="8CQW">
    <property type="method" value="X-ray"/>
    <property type="resolution" value="3.05 A"/>
    <property type="chains" value="DD/S=1-142"/>
</dbReference>
<dbReference type="PDB" id="8CRE">
    <property type="method" value="X-ray"/>
    <property type="resolution" value="3.00 A"/>
    <property type="chains" value="DD/S=1-142"/>
</dbReference>
<dbReference type="PDB" id="8OEQ">
    <property type="method" value="X-ray"/>
    <property type="resolution" value="3.30 A"/>
    <property type="chains" value="DD/S=1-142"/>
</dbReference>
<dbReference type="PDB" id="8OGJ">
    <property type="method" value="EM"/>
    <property type="resolution" value="3.10 A"/>
    <property type="chains" value="R=1-142"/>
</dbReference>
<dbReference type="PDB" id="8OH6">
    <property type="method" value="X-ray"/>
    <property type="resolution" value="3.35 A"/>
    <property type="chains" value="DD/S=1-142"/>
</dbReference>
<dbReference type="PDB" id="8OI5">
    <property type="method" value="X-ray"/>
    <property type="resolution" value="2.90 A"/>
    <property type="chains" value="DD/S=1-142"/>
</dbReference>
<dbReference type="PDB" id="8OJ3">
    <property type="method" value="X-ray"/>
    <property type="resolution" value="3.50 A"/>
    <property type="chains" value="DD/S=1-142"/>
</dbReference>
<dbReference type="PDB" id="8Q5I">
    <property type="method" value="EM"/>
    <property type="resolution" value="2.45 A"/>
    <property type="chains" value="R=1-142"/>
</dbReference>
<dbReference type="PDBsum" id="8C3A"/>
<dbReference type="PDBsum" id="8CQ7"/>
<dbReference type="PDBsum" id="8CQW"/>
<dbReference type="PDBsum" id="8CRE"/>
<dbReference type="PDBsum" id="8OEQ"/>
<dbReference type="PDBsum" id="8OGJ"/>
<dbReference type="PDBsum" id="8OH6"/>
<dbReference type="PDBsum" id="8OI5"/>
<dbReference type="PDBsum" id="8OJ3"/>
<dbReference type="PDBsum" id="8Q5I"/>
<dbReference type="EMDB" id="EMD-16874"/>
<dbReference type="SMR" id="O94017"/>
<dbReference type="EnsemblFungi" id="C1_03030W_A-T">
    <property type="protein sequence ID" value="C1_03030W_A-T-p1"/>
    <property type="gene ID" value="C1_03030W_A"/>
</dbReference>
<dbReference type="VEuPathDB" id="FungiDB:C1_03030W_A"/>
<dbReference type="VEuPathDB" id="FungiDB:CAWG_01081"/>
<dbReference type="OMA" id="WPIEMAR"/>
<dbReference type="PhylomeDB" id="O94017"/>
<dbReference type="GO" id="GO:0022627">
    <property type="term" value="C:cytosolic small ribosomal subunit"/>
    <property type="evidence" value="ECO:0007669"/>
    <property type="project" value="TreeGrafter"/>
</dbReference>
<dbReference type="GO" id="GO:0003723">
    <property type="term" value="F:RNA binding"/>
    <property type="evidence" value="ECO:0007669"/>
    <property type="project" value="TreeGrafter"/>
</dbReference>
<dbReference type="GO" id="GO:0003735">
    <property type="term" value="F:structural constituent of ribosome"/>
    <property type="evidence" value="ECO:0007669"/>
    <property type="project" value="InterPro"/>
</dbReference>
<dbReference type="GO" id="GO:0000462">
    <property type="term" value="P:maturation of SSU-rRNA from tricistronic rRNA transcript (SSU-rRNA, 5.8S rRNA, LSU-rRNA)"/>
    <property type="evidence" value="ECO:0007669"/>
    <property type="project" value="TreeGrafter"/>
</dbReference>
<dbReference type="GO" id="GO:0006412">
    <property type="term" value="P:translation"/>
    <property type="evidence" value="ECO:0007669"/>
    <property type="project" value="InterPro"/>
</dbReference>
<dbReference type="FunFam" id="3.30.230.10:FF:000007">
    <property type="entry name" value="40S ribosomal protein S16"/>
    <property type="match status" value="1"/>
</dbReference>
<dbReference type="Gene3D" id="3.30.230.10">
    <property type="match status" value="1"/>
</dbReference>
<dbReference type="InterPro" id="IPR020568">
    <property type="entry name" value="Ribosomal_Su5_D2-typ_SF"/>
</dbReference>
<dbReference type="InterPro" id="IPR000754">
    <property type="entry name" value="Ribosomal_uS9"/>
</dbReference>
<dbReference type="InterPro" id="IPR020574">
    <property type="entry name" value="Ribosomal_uS9_CS"/>
</dbReference>
<dbReference type="InterPro" id="IPR014721">
    <property type="entry name" value="Ribsml_uS5_D2-typ_fold_subgr"/>
</dbReference>
<dbReference type="NCBIfam" id="NF001749">
    <property type="entry name" value="PRK00474.1"/>
    <property type="match status" value="1"/>
</dbReference>
<dbReference type="PANTHER" id="PTHR21569:SF16">
    <property type="entry name" value="RIBOSOMAL PROTEIN S16"/>
    <property type="match status" value="1"/>
</dbReference>
<dbReference type="PANTHER" id="PTHR21569">
    <property type="entry name" value="RIBOSOMAL PROTEIN S9"/>
    <property type="match status" value="1"/>
</dbReference>
<dbReference type="Pfam" id="PF00380">
    <property type="entry name" value="Ribosomal_S9"/>
    <property type="match status" value="1"/>
</dbReference>
<dbReference type="SUPFAM" id="SSF54211">
    <property type="entry name" value="Ribosomal protein S5 domain 2-like"/>
    <property type="match status" value="1"/>
</dbReference>
<dbReference type="PROSITE" id="PS00360">
    <property type="entry name" value="RIBOSOMAL_S9"/>
    <property type="match status" value="1"/>
</dbReference>
<proteinExistence type="evidence at protein level"/>
<name>RS16_CANAX</name>
<keyword id="KW-0002">3D-structure</keyword>
<keyword id="KW-0687">Ribonucleoprotein</keyword>
<keyword id="KW-0689">Ribosomal protein</keyword>
<protein>
    <recommendedName>
        <fullName evidence="1">Small ribosomal subunit protein uS9</fullName>
    </recommendedName>
    <alternativeName>
        <fullName>40S ribosomal protein S16</fullName>
    </alternativeName>
</protein>
<gene>
    <name type="primary">RPS16</name>
    <name type="ORF">Ca49C10.01c</name>
</gene>
<accession>O94017</accession>
<comment type="similarity">
    <text evidence="1">Belongs to the universal ribosomal protein uS9 family.</text>
</comment>
<evidence type="ECO:0000305" key="1"/>
<sequence length="142" mass="15739">MSTQSVQTFGKKKTATAVAHVKAGKGLIKINGSPITLVQPEILRFKVYEPLTLVGLDKFQGIDIRVKVTGGGHVSQVYAIRQAIAKGLVAYHQKYVDEASKNELKKIFASYDKTLLVADSRRMEPKKFGGRGARARFQKSYR</sequence>
<feature type="chain" id="PRO_0000111496" description="Small ribosomal subunit protein uS9">
    <location>
        <begin position="1"/>
        <end position="142"/>
    </location>
</feature>
<organism>
    <name type="scientific">Candida albicans</name>
    <name type="common">Yeast</name>
    <dbReference type="NCBI Taxonomy" id="5476"/>
    <lineage>
        <taxon>Eukaryota</taxon>
        <taxon>Fungi</taxon>
        <taxon>Dikarya</taxon>
        <taxon>Ascomycota</taxon>
        <taxon>Saccharomycotina</taxon>
        <taxon>Pichiomycetes</taxon>
        <taxon>Debaryomycetaceae</taxon>
        <taxon>Candida/Lodderomyces clade</taxon>
        <taxon>Candida</taxon>
    </lineage>
</organism>
<reference key="1">
    <citation type="submission" date="1998-11" db="EMBL/GenBank/DDBJ databases">
        <title>Candida albicans strain 1161 genome pilot sequencing project.</title>
        <authorList>
            <person name="Taylor K."/>
            <person name="Harris D."/>
            <person name="Barrell B.G."/>
            <person name="Rajandream M.A."/>
        </authorList>
    </citation>
    <scope>NUCLEOTIDE SEQUENCE [LARGE SCALE GENOMIC DNA]</scope>
    <source>
        <strain>1161</strain>
    </source>
</reference>